<sequence length="247" mass="28032">MMDAVAPASDAGPDLAAIAADASGERAVGRPTVYVYEAPVRICHWVNAFSIIVLMVTGYLIGTPLPTVAGEASDNFVMGYIRFAHFAAGQVLAVFFLTRILWAFVGNHHSRQIFYIPVHRKQFWKEVLHEIRWYAFLEREPKMYVGHNPLAQTAMFTGFTLFVAFMIVTGFALYSEGQGIDSWQHKLFGWVFAIWPNSQDVHTWHHLGMWALVVFVMVHIYAAVREDIMSRQSIISSMISGERQFRD</sequence>
<dbReference type="EMBL" id="Z21948">
    <property type="protein sequence ID" value="CAA79943.1"/>
    <property type="molecule type" value="Genomic_DNA"/>
</dbReference>
<dbReference type="EMBL" id="L24446">
    <property type="protein sequence ID" value="AAD13468.1"/>
    <property type="molecule type" value="Genomic_DNA"/>
</dbReference>
<dbReference type="EMBL" id="BA000040">
    <property type="protein sequence ID" value="BAC52205.1"/>
    <property type="molecule type" value="Genomic_DNA"/>
</dbReference>
<dbReference type="EMBL" id="J04114">
    <property type="status" value="NOT_ANNOTATED_CDS"/>
    <property type="molecule type" value="Genomic_DNA"/>
</dbReference>
<dbReference type="PIR" id="S39400">
    <property type="entry name" value="S39400"/>
</dbReference>
<dbReference type="RefSeq" id="NP_773580.1">
    <property type="nucleotide sequence ID" value="NC_004463.1"/>
</dbReference>
<dbReference type="RefSeq" id="WP_011089678.1">
    <property type="nucleotide sequence ID" value="NC_004463.1"/>
</dbReference>
<dbReference type="FunCoup" id="P21960">
    <property type="interactions" value="250"/>
</dbReference>
<dbReference type="STRING" id="224911.AAV28_32290"/>
<dbReference type="EnsemblBacteria" id="BAC52205">
    <property type="protein sequence ID" value="BAC52205"/>
    <property type="gene ID" value="BAC52205"/>
</dbReference>
<dbReference type="GeneID" id="46493906"/>
<dbReference type="KEGG" id="bja:bll6940"/>
<dbReference type="PATRIC" id="fig|224911.44.peg.6974"/>
<dbReference type="eggNOG" id="COG1969">
    <property type="taxonomic scope" value="Bacteria"/>
</dbReference>
<dbReference type="HOGENOM" id="CLU_075520_0_0_5"/>
<dbReference type="InParanoid" id="P21960"/>
<dbReference type="OrthoDB" id="9781740at2"/>
<dbReference type="PhylomeDB" id="P21960"/>
<dbReference type="Proteomes" id="UP000002526">
    <property type="component" value="Chromosome"/>
</dbReference>
<dbReference type="GO" id="GO:0005886">
    <property type="term" value="C:plasma membrane"/>
    <property type="evidence" value="ECO:0000318"/>
    <property type="project" value="GO_Central"/>
</dbReference>
<dbReference type="GO" id="GO:0009055">
    <property type="term" value="F:electron transfer activity"/>
    <property type="evidence" value="ECO:0007669"/>
    <property type="project" value="InterPro"/>
</dbReference>
<dbReference type="GO" id="GO:0020037">
    <property type="term" value="F:heme binding"/>
    <property type="evidence" value="ECO:0000318"/>
    <property type="project" value="GO_Central"/>
</dbReference>
<dbReference type="GO" id="GO:0005506">
    <property type="term" value="F:iron ion binding"/>
    <property type="evidence" value="ECO:0007669"/>
    <property type="project" value="InterPro"/>
</dbReference>
<dbReference type="GO" id="GO:0022904">
    <property type="term" value="P:respiratory electron transport chain"/>
    <property type="evidence" value="ECO:0007669"/>
    <property type="project" value="InterPro"/>
</dbReference>
<dbReference type="FunFam" id="1.20.950.20:FF:000003">
    <property type="entry name" value="Ni/Fe-hydrogenase 1 b-type cytochrome subunit"/>
    <property type="match status" value="1"/>
</dbReference>
<dbReference type="Gene3D" id="1.20.950.20">
    <property type="entry name" value="Transmembrane di-heme cytochromes, Chain C"/>
    <property type="match status" value="1"/>
</dbReference>
<dbReference type="InterPro" id="IPR011577">
    <property type="entry name" value="Cyt_b561_bac/Ni-Hgenase"/>
</dbReference>
<dbReference type="InterPro" id="IPR016174">
    <property type="entry name" value="Di-haem_cyt_TM"/>
</dbReference>
<dbReference type="InterPro" id="IPR051542">
    <property type="entry name" value="Hydrogenase_cytochrome"/>
</dbReference>
<dbReference type="InterPro" id="IPR000516">
    <property type="entry name" value="Ni-dep_Hydgase_cyt-B"/>
</dbReference>
<dbReference type="NCBIfam" id="TIGR02125">
    <property type="entry name" value="CytB-hydogenase"/>
    <property type="match status" value="1"/>
</dbReference>
<dbReference type="PANTHER" id="PTHR30485">
    <property type="entry name" value="NI/FE-HYDROGENASE 1 B-TYPE CYTOCHROME SUBUNIT"/>
    <property type="match status" value="1"/>
</dbReference>
<dbReference type="PANTHER" id="PTHR30485:SF0">
    <property type="entry name" value="NI_FE-HYDROGENASE 1 B-TYPE CYTOCHROME SUBUNIT-RELATED"/>
    <property type="match status" value="1"/>
</dbReference>
<dbReference type="Pfam" id="PF01292">
    <property type="entry name" value="Ni_hydr_CYTB"/>
    <property type="match status" value="1"/>
</dbReference>
<dbReference type="PRINTS" id="PR00161">
    <property type="entry name" value="NIHGNASECYTB"/>
</dbReference>
<dbReference type="SUPFAM" id="SSF81342">
    <property type="entry name" value="Transmembrane di-heme cytochromes"/>
    <property type="match status" value="1"/>
</dbReference>
<dbReference type="PROSITE" id="PS00882">
    <property type="entry name" value="NI_HGENASE_CYTB_1"/>
    <property type="match status" value="1"/>
</dbReference>
<dbReference type="PROSITE" id="PS00883">
    <property type="entry name" value="NI_HGENASE_CYTB_2"/>
    <property type="match status" value="1"/>
</dbReference>
<comment type="function">
    <text evidence="1">B-type cytochrome involved in electron transfer from hydrogenase to oxygen.</text>
</comment>
<comment type="subcellular location">
    <subcellularLocation>
        <location>Cell membrane</location>
        <topology>Multi-pass membrane protein</topology>
    </subcellularLocation>
</comment>
<comment type="similarity">
    <text evidence="3">Belongs to the HupC/HyaC/HydC family.</text>
</comment>
<gene>
    <name type="primary">hupC</name>
    <name type="ordered locus">bll6940</name>
</gene>
<organism>
    <name type="scientific">Bradyrhizobium diazoefficiens (strain JCM 10833 / BCRC 13528 / IAM 13628 / NBRC 14792 / USDA 110)</name>
    <dbReference type="NCBI Taxonomy" id="224911"/>
    <lineage>
        <taxon>Bacteria</taxon>
        <taxon>Pseudomonadati</taxon>
        <taxon>Pseudomonadota</taxon>
        <taxon>Alphaproteobacteria</taxon>
        <taxon>Hyphomicrobiales</taxon>
        <taxon>Nitrobacteraceae</taxon>
        <taxon>Bradyrhizobium</taxon>
    </lineage>
</organism>
<protein>
    <recommendedName>
        <fullName>Probable Ni/Fe-hydrogenase B-type cytochrome subunit</fullName>
    </recommendedName>
</protein>
<evidence type="ECO:0000250" key="1"/>
<evidence type="ECO:0000255" key="2"/>
<evidence type="ECO:0000305" key="3"/>
<reference key="1">
    <citation type="journal article" date="1993" name="J. Mol. Biol.">
        <title>Nucleotide sequence analysis of four genes, hupC, hupD, hupF and hupG, downstream of the hydrogenase structural genes in Bradyrhizobium japonicum.</title>
        <authorList>
            <person name="van Soom C."/>
            <person name="Browaeys J."/>
            <person name="Verreth C."/>
            <person name="Vanderleyden J."/>
        </authorList>
    </citation>
    <scope>NUCLEOTIDE SEQUENCE [GENOMIC DNA]</scope>
</reference>
<reference key="2">
    <citation type="journal article" date="1994" name="Gene">
        <title>Sequence and characterization of three genes within the hydrogenase gene cluster of Bradyrhizobium japonicum.</title>
        <authorList>
            <person name="Fu C."/>
            <person name="Maier R.J."/>
        </authorList>
    </citation>
    <scope>NUCLEOTIDE SEQUENCE [GENOMIC DNA]</scope>
    <source>
        <strain>JCM 10833 / BCRC 13528 / IAM 13628 / NBRC 14792 / USDA 110</strain>
    </source>
</reference>
<reference key="3">
    <citation type="journal article" date="2002" name="DNA Res.">
        <title>Complete genomic sequence of nitrogen-fixing symbiotic bacterium Bradyrhizobium japonicum USDA110.</title>
        <authorList>
            <person name="Kaneko T."/>
            <person name="Nakamura Y."/>
            <person name="Sato S."/>
            <person name="Minamisawa K."/>
            <person name="Uchiumi T."/>
            <person name="Sasamoto S."/>
            <person name="Watanabe A."/>
            <person name="Idesawa K."/>
            <person name="Iriguchi M."/>
            <person name="Kawashima K."/>
            <person name="Kohara M."/>
            <person name="Matsumoto M."/>
            <person name="Shimpo S."/>
            <person name="Tsuruoka H."/>
            <person name="Wada T."/>
            <person name="Yamada M."/>
            <person name="Tabata S."/>
        </authorList>
    </citation>
    <scope>NUCLEOTIDE SEQUENCE [LARGE SCALE GENOMIC DNA]</scope>
    <source>
        <strain>JCM 10833 / BCRC 13528 / IAM 13628 / NBRC 14792 / USDA 110</strain>
    </source>
</reference>
<reference key="4">
    <citation type="journal article" date="1988" name="Proc. Natl. Acad. Sci. U.S.A.">
        <title>Nucleotide sequence of the genetic loci encoding subunits of Bradyrhizobium japonicum uptake hydrogenase.</title>
        <authorList>
            <person name="Sayavedra-Soto L.A."/>
            <person name="Powell G.K."/>
            <person name="Evans H.J."/>
            <person name="Morris R.O."/>
        </authorList>
    </citation>
    <scope>NUCLEOTIDE SEQUENCE [GENOMIC DNA] OF 1-111</scope>
</reference>
<accession>P21960</accession>
<accession>Q45248</accession>
<name>CYBH_BRADU</name>
<keyword id="KW-1003">Cell membrane</keyword>
<keyword id="KW-0249">Electron transport</keyword>
<keyword id="KW-0349">Heme</keyword>
<keyword id="KW-0408">Iron</keyword>
<keyword id="KW-0472">Membrane</keyword>
<keyword id="KW-0479">Metal-binding</keyword>
<keyword id="KW-1185">Reference proteome</keyword>
<keyword id="KW-0812">Transmembrane</keyword>
<keyword id="KW-1133">Transmembrane helix</keyword>
<keyword id="KW-0813">Transport</keyword>
<proteinExistence type="inferred from homology"/>
<feature type="chain" id="PRO_0000201381" description="Probable Ni/Fe-hydrogenase B-type cytochrome subunit">
    <location>
        <begin position="1"/>
        <end position="247"/>
    </location>
</feature>
<feature type="transmembrane region" description="Helical" evidence="2">
    <location>
        <begin position="42"/>
        <end position="62"/>
    </location>
</feature>
<feature type="transmembrane region" description="Helical" evidence="2">
    <location>
        <begin position="86"/>
        <end position="106"/>
    </location>
</feature>
<feature type="transmembrane region" description="Helical" evidence="2">
    <location>
        <begin position="154"/>
        <end position="174"/>
    </location>
</feature>
<feature type="transmembrane region" description="Helical" evidence="2">
    <location>
        <begin position="204"/>
        <end position="224"/>
    </location>
</feature>
<feature type="sequence conflict" description="In Ref. 1 and 4." evidence="3" ref="1 4">
    <original>G</original>
    <variation>R</variation>
    <location>
        <position position="12"/>
    </location>
</feature>
<feature type="sequence conflict" description="In Ref. 1 and 4." evidence="3" ref="1 4">
    <original>AIAA</original>
    <variation>SR</variation>
    <location>
        <begin position="17"/>
        <end position="20"/>
    </location>
</feature>
<feature type="sequence conflict" description="In Ref. 1; CAA79943." evidence="3" ref="1">
    <original>IWPNSQDV</original>
    <variation>SGRQPGR</variation>
    <location>
        <begin position="194"/>
        <end position="201"/>
    </location>
</feature>